<sequence length="105" mass="12255">MLLNKITFFERFEHDILSGAKTITLRDEAESHVITGQILPVSTFETDRWFCDIQIIDVTPVKLTELTEMHAKQENMTLPQLRDVIAEIYPGLEQLFMIRFMILSQ</sequence>
<proteinExistence type="inferred from homology"/>
<keyword id="KW-0378">Hydrolase</keyword>
<gene>
    <name type="ordered locus">Shew185_2517</name>
</gene>
<reference key="1">
    <citation type="submission" date="2007-07" db="EMBL/GenBank/DDBJ databases">
        <title>Complete sequence of chromosome of Shewanella baltica OS185.</title>
        <authorList>
            <consortium name="US DOE Joint Genome Institute"/>
            <person name="Copeland A."/>
            <person name="Lucas S."/>
            <person name="Lapidus A."/>
            <person name="Barry K."/>
            <person name="Glavina del Rio T."/>
            <person name="Dalin E."/>
            <person name="Tice H."/>
            <person name="Pitluck S."/>
            <person name="Sims D."/>
            <person name="Brettin T."/>
            <person name="Bruce D."/>
            <person name="Detter J.C."/>
            <person name="Han C."/>
            <person name="Schmutz J."/>
            <person name="Larimer F."/>
            <person name="Land M."/>
            <person name="Hauser L."/>
            <person name="Kyrpides N."/>
            <person name="Mikhailova N."/>
            <person name="Brettar I."/>
            <person name="Rodrigues J."/>
            <person name="Konstantinidis K."/>
            <person name="Tiedje J."/>
            <person name="Richardson P."/>
        </authorList>
    </citation>
    <scope>NUCLEOTIDE SEQUENCE [LARGE SCALE GENOMIC DNA]</scope>
    <source>
        <strain>OS185</strain>
    </source>
</reference>
<accession>A6WPB5</accession>
<feature type="chain" id="PRO_1000044954" description="N(4)-acetylcytidine amidohydrolase">
    <location>
        <begin position="1"/>
        <end position="105"/>
    </location>
</feature>
<feature type="domain" description="ASCH" evidence="1">
    <location>
        <begin position="7"/>
        <end position="93"/>
    </location>
</feature>
<feature type="active site" description="Proton acceptor" evidence="2">
    <location>
        <position position="21"/>
    </location>
</feature>
<feature type="active site" description="Nucleophile" evidence="2">
    <location>
        <position position="24"/>
    </location>
</feature>
<feature type="active site" description="Proton donor" evidence="2">
    <location>
        <position position="74"/>
    </location>
</feature>
<organism>
    <name type="scientific">Shewanella baltica (strain OS185)</name>
    <dbReference type="NCBI Taxonomy" id="402882"/>
    <lineage>
        <taxon>Bacteria</taxon>
        <taxon>Pseudomonadati</taxon>
        <taxon>Pseudomonadota</taxon>
        <taxon>Gammaproteobacteria</taxon>
        <taxon>Alteromonadales</taxon>
        <taxon>Shewanellaceae</taxon>
        <taxon>Shewanella</taxon>
    </lineage>
</organism>
<name>AC4CH_SHEB8</name>
<dbReference type="EC" id="3.5.1.135" evidence="2"/>
<dbReference type="EMBL" id="CP000753">
    <property type="protein sequence ID" value="ABS08654.1"/>
    <property type="molecule type" value="Genomic_DNA"/>
</dbReference>
<dbReference type="RefSeq" id="WP_012089419.1">
    <property type="nucleotide sequence ID" value="NC_009665.1"/>
</dbReference>
<dbReference type="SMR" id="A6WPB5"/>
<dbReference type="KEGG" id="sbm:Shew185_2517"/>
<dbReference type="HOGENOM" id="CLU_152586_0_0_6"/>
<dbReference type="GO" id="GO:0005829">
    <property type="term" value="C:cytosol"/>
    <property type="evidence" value="ECO:0007669"/>
    <property type="project" value="TreeGrafter"/>
</dbReference>
<dbReference type="GO" id="GO:0016813">
    <property type="term" value="F:hydrolase activity, acting on carbon-nitrogen (but not peptide) bonds, in linear amidines"/>
    <property type="evidence" value="ECO:0007669"/>
    <property type="project" value="UniProtKB-UniRule"/>
</dbReference>
<dbReference type="GO" id="GO:0106251">
    <property type="term" value="F:N4-acetylcytidine amidohydrolase activity"/>
    <property type="evidence" value="ECO:0007669"/>
    <property type="project" value="RHEA"/>
</dbReference>
<dbReference type="CDD" id="cd06552">
    <property type="entry name" value="ASCH_yqfb_like"/>
    <property type="match status" value="1"/>
</dbReference>
<dbReference type="Gene3D" id="2.30.130.30">
    <property type="entry name" value="Hypothetical protein"/>
    <property type="match status" value="1"/>
</dbReference>
<dbReference type="HAMAP" id="MF_00684">
    <property type="entry name" value="ac4C_amidohydr"/>
    <property type="match status" value="1"/>
</dbReference>
<dbReference type="InterPro" id="IPR008314">
    <property type="entry name" value="AC4CH"/>
</dbReference>
<dbReference type="InterPro" id="IPR007374">
    <property type="entry name" value="ASCH_domain"/>
</dbReference>
<dbReference type="InterPro" id="IPR015947">
    <property type="entry name" value="PUA-like_sf"/>
</dbReference>
<dbReference type="NCBIfam" id="NF003443">
    <property type="entry name" value="PRK04980.1"/>
    <property type="match status" value="1"/>
</dbReference>
<dbReference type="PANTHER" id="PTHR38088">
    <property type="entry name" value="UCP029143 FAMILY PROTEIN"/>
    <property type="match status" value="1"/>
</dbReference>
<dbReference type="PANTHER" id="PTHR38088:SF2">
    <property type="entry name" value="UCP029143 FAMILY PROTEIN"/>
    <property type="match status" value="1"/>
</dbReference>
<dbReference type="Pfam" id="PF04266">
    <property type="entry name" value="ASCH"/>
    <property type="match status" value="1"/>
</dbReference>
<dbReference type="PIRSF" id="PIRSF029143">
    <property type="entry name" value="UCP029143"/>
    <property type="match status" value="1"/>
</dbReference>
<dbReference type="SMART" id="SM01022">
    <property type="entry name" value="ASCH"/>
    <property type="match status" value="1"/>
</dbReference>
<dbReference type="SUPFAM" id="SSF88697">
    <property type="entry name" value="PUA domain-like"/>
    <property type="match status" value="1"/>
</dbReference>
<evidence type="ECO:0000255" key="1"/>
<evidence type="ECO:0000255" key="2">
    <source>
        <dbReference type="HAMAP-Rule" id="MF_00684"/>
    </source>
</evidence>
<protein>
    <recommendedName>
        <fullName evidence="2">N(4)-acetylcytidine amidohydrolase</fullName>
        <shortName evidence="2">ac4C amidohydrolase</shortName>
        <ecNumber evidence="2">3.5.1.135</ecNumber>
    </recommendedName>
</protein>
<comment type="function">
    <text evidence="2">Catalyzes the hydrolysis of N(4)-acetylcytidine (ac4C).</text>
</comment>
<comment type="catalytic activity">
    <reaction evidence="2">
        <text>N(4)-acetylcytidine + H2O = cytidine + acetate + H(+)</text>
        <dbReference type="Rhea" id="RHEA:62932"/>
        <dbReference type="ChEBI" id="CHEBI:15377"/>
        <dbReference type="ChEBI" id="CHEBI:15378"/>
        <dbReference type="ChEBI" id="CHEBI:17562"/>
        <dbReference type="ChEBI" id="CHEBI:30089"/>
        <dbReference type="ChEBI" id="CHEBI:70989"/>
        <dbReference type="EC" id="3.5.1.135"/>
    </reaction>
</comment>
<comment type="catalytic activity">
    <reaction evidence="2">
        <text>N(4)-acetyl-2'-deoxycytidine + H2O = 2'-deoxycytidine + acetate + H(+)</text>
        <dbReference type="Rhea" id="RHEA:62936"/>
        <dbReference type="ChEBI" id="CHEBI:15377"/>
        <dbReference type="ChEBI" id="CHEBI:15378"/>
        <dbReference type="ChEBI" id="CHEBI:15698"/>
        <dbReference type="ChEBI" id="CHEBI:30089"/>
        <dbReference type="ChEBI" id="CHEBI:146133"/>
        <dbReference type="EC" id="3.5.1.135"/>
    </reaction>
</comment>
<comment type="catalytic activity">
    <reaction evidence="2">
        <text>N(4)-acetylcytosine + H2O = cytosine + acetate + H(+)</text>
        <dbReference type="Rhea" id="RHEA:62940"/>
        <dbReference type="ChEBI" id="CHEBI:15377"/>
        <dbReference type="ChEBI" id="CHEBI:15378"/>
        <dbReference type="ChEBI" id="CHEBI:16040"/>
        <dbReference type="ChEBI" id="CHEBI:30089"/>
        <dbReference type="ChEBI" id="CHEBI:146134"/>
        <dbReference type="EC" id="3.5.1.135"/>
    </reaction>
</comment>
<comment type="similarity">
    <text evidence="2">Belongs to the N(4)-acetylcytidine amidohydrolase family.</text>
</comment>